<protein>
    <recommendedName>
        <fullName evidence="1">Flagellar P-ring protein</fullName>
    </recommendedName>
    <alternativeName>
        <fullName evidence="1">Basal body P-ring protein</fullName>
    </alternativeName>
</protein>
<proteinExistence type="inferred from homology"/>
<name>FLGI_RHILW</name>
<comment type="function">
    <text evidence="1">Assembles around the rod to form the L-ring and probably protects the motor/basal body from shearing forces during rotation.</text>
</comment>
<comment type="subunit">
    <text evidence="1">The basal body constitutes a major portion of the flagellar organelle and consists of four rings (L,P,S, and M) mounted on a central rod.</text>
</comment>
<comment type="subcellular location">
    <subcellularLocation>
        <location evidence="1">Periplasm</location>
    </subcellularLocation>
    <subcellularLocation>
        <location evidence="1">Bacterial flagellum basal body</location>
    </subcellularLocation>
</comment>
<comment type="similarity">
    <text evidence="1">Belongs to the FlgI family.</text>
</comment>
<keyword id="KW-0975">Bacterial flagellum</keyword>
<keyword id="KW-0574">Periplasm</keyword>
<keyword id="KW-1185">Reference proteome</keyword>
<keyword id="KW-0732">Signal</keyword>
<accession>B5ZQE0</accession>
<gene>
    <name evidence="1" type="primary">flgI</name>
    <name type="ordered locus">Rleg2_0322</name>
</gene>
<feature type="signal peptide" evidence="1">
    <location>
        <begin position="1"/>
        <end position="26"/>
    </location>
</feature>
<feature type="chain" id="PRO_5000403795" description="Flagellar P-ring protein">
    <location>
        <begin position="27"/>
        <end position="373"/>
    </location>
</feature>
<sequence length="373" mass="38820">MKLFFRFLTLVAVLAMSLADVAPAWALTSRIKDIASLQAGRDNQLIGYGLIVGLQGTGDGFRASPFTEQSMRAMLQNLGISTQGGQSNAKNTAAVMVTANLPPFASPGSRIDVTVSSLGDATSLRGGTLVMTSLSGADGQIYAVAQGAAIVTGFQAQGQAATVTEGVTTAGRVPGGAIIERELPSRFKDSVNLVLQLRNPDFSTAIRIADIVNGYASARFGGPVAEAKDSQEVVIQKPRTADLTRLMADIENLIVETDTPAKVVINERTGTIVIGSDVRVSPVAVSYGTLTVQVTETPQIIQPEPFSQGRTAVQPQTDIAAEQTGGRVAIIDGPDLRTLVAGLNNIGVKPDGIIAILQGIKSAGALQAELVLQ</sequence>
<evidence type="ECO:0000255" key="1">
    <source>
        <dbReference type="HAMAP-Rule" id="MF_00416"/>
    </source>
</evidence>
<dbReference type="EMBL" id="CP001191">
    <property type="protein sequence ID" value="ACI53621.1"/>
    <property type="molecule type" value="Genomic_DNA"/>
</dbReference>
<dbReference type="RefSeq" id="WP_003588542.1">
    <property type="nucleotide sequence ID" value="NC_011369.1"/>
</dbReference>
<dbReference type="SMR" id="B5ZQE0"/>
<dbReference type="STRING" id="395492.Rleg2_0322"/>
<dbReference type="KEGG" id="rlt:Rleg2_0322"/>
<dbReference type="eggNOG" id="COG1706">
    <property type="taxonomic scope" value="Bacteria"/>
</dbReference>
<dbReference type="HOGENOM" id="CLU_045235_1_0_5"/>
<dbReference type="Proteomes" id="UP000008330">
    <property type="component" value="Chromosome"/>
</dbReference>
<dbReference type="GO" id="GO:0009428">
    <property type="term" value="C:bacterial-type flagellum basal body, distal rod, P ring"/>
    <property type="evidence" value="ECO:0007669"/>
    <property type="project" value="InterPro"/>
</dbReference>
<dbReference type="GO" id="GO:0030288">
    <property type="term" value="C:outer membrane-bounded periplasmic space"/>
    <property type="evidence" value="ECO:0007669"/>
    <property type="project" value="InterPro"/>
</dbReference>
<dbReference type="GO" id="GO:0005198">
    <property type="term" value="F:structural molecule activity"/>
    <property type="evidence" value="ECO:0007669"/>
    <property type="project" value="InterPro"/>
</dbReference>
<dbReference type="GO" id="GO:0071973">
    <property type="term" value="P:bacterial-type flagellum-dependent cell motility"/>
    <property type="evidence" value="ECO:0007669"/>
    <property type="project" value="InterPro"/>
</dbReference>
<dbReference type="HAMAP" id="MF_00416">
    <property type="entry name" value="FlgI"/>
    <property type="match status" value="1"/>
</dbReference>
<dbReference type="InterPro" id="IPR001782">
    <property type="entry name" value="Flag_FlgI"/>
</dbReference>
<dbReference type="NCBIfam" id="NF003676">
    <property type="entry name" value="PRK05303.1"/>
    <property type="match status" value="1"/>
</dbReference>
<dbReference type="PANTHER" id="PTHR30381">
    <property type="entry name" value="FLAGELLAR P-RING PERIPLASMIC PROTEIN FLGI"/>
    <property type="match status" value="1"/>
</dbReference>
<dbReference type="PANTHER" id="PTHR30381:SF0">
    <property type="entry name" value="FLAGELLAR P-RING PROTEIN"/>
    <property type="match status" value="1"/>
</dbReference>
<dbReference type="Pfam" id="PF02119">
    <property type="entry name" value="FlgI"/>
    <property type="match status" value="1"/>
</dbReference>
<dbReference type="PRINTS" id="PR01010">
    <property type="entry name" value="FLGPRINGFLGI"/>
</dbReference>
<reference key="1">
    <citation type="journal article" date="2010" name="Stand. Genomic Sci.">
        <title>Complete genome sequence of Rhizobium leguminosarum bv trifolii strain WSM2304, an effective microsymbiont of the South American clover Trifolium polymorphum.</title>
        <authorList>
            <person name="Reeve W."/>
            <person name="O'Hara G."/>
            <person name="Chain P."/>
            <person name="Ardley J."/>
            <person name="Brau L."/>
            <person name="Nandesena K."/>
            <person name="Tiwari R."/>
            <person name="Malfatti S."/>
            <person name="Kiss H."/>
            <person name="Lapidus A."/>
            <person name="Copeland A."/>
            <person name="Nolan M."/>
            <person name="Land M."/>
            <person name="Ivanova N."/>
            <person name="Mavromatis K."/>
            <person name="Markowitz V."/>
            <person name="Kyrpides N."/>
            <person name="Melino V."/>
            <person name="Denton M."/>
            <person name="Yates R."/>
            <person name="Howieson J."/>
        </authorList>
    </citation>
    <scope>NUCLEOTIDE SEQUENCE [LARGE SCALE GENOMIC DNA]</scope>
    <source>
        <strain>WSM2304</strain>
    </source>
</reference>
<organism>
    <name type="scientific">Rhizobium leguminosarum bv. trifolii (strain WSM2304)</name>
    <dbReference type="NCBI Taxonomy" id="395492"/>
    <lineage>
        <taxon>Bacteria</taxon>
        <taxon>Pseudomonadati</taxon>
        <taxon>Pseudomonadota</taxon>
        <taxon>Alphaproteobacteria</taxon>
        <taxon>Hyphomicrobiales</taxon>
        <taxon>Rhizobiaceae</taxon>
        <taxon>Rhizobium/Agrobacterium group</taxon>
        <taxon>Rhizobium</taxon>
    </lineage>
</organism>